<organism>
    <name type="scientific">Sulfurihydrogenibium azorense (strain DSM 15241 / OCM 825 / Az-Fu1)</name>
    <dbReference type="NCBI Taxonomy" id="204536"/>
    <lineage>
        <taxon>Bacteria</taxon>
        <taxon>Pseudomonadati</taxon>
        <taxon>Aquificota</taxon>
        <taxon>Aquificia</taxon>
        <taxon>Aquificales</taxon>
        <taxon>Hydrogenothermaceae</taxon>
        <taxon>Sulfurihydrogenibium</taxon>
    </lineage>
</organism>
<sequence>MEIEEIKVQTEVNGAPFIIETGYFAKQANGAVIVRQGDTAVLVAAVMSEEPQADIDFLPLTVEYREKYYAYGKIPGGFVKREGKPTDREILVARNIDRPIRPLFPKGFYNDIVITAYTLSADDKYDPDVLGIVGASAALHISDIPFEGPIAGVRVCRVNGEFIVNPTYQQKAQADIEIVVAGSKDAIVMVEGGAKEVPEEDILEAMMFGHQEIKKLIELQEELRLKCGKEKIQVAIDEEEIILKDKLKEFSYEKIKEAFKITDKKQRNKTINAIFEEAFKTLEIPEEKIKKASFIYKDIVSNVMRDNILNEGIRIDGRKPEEIRPIWIKVGVFPRNHGSAIFTRGQTQAFVTVTLGSLSEGQIEESIEAGEVMKRFMLHYNFPPFSTGEAKPPRATSRREIGHGNLAERALEPLIPPEEEFPYAIRVVSDILESNGSTSMATVCGGSLALFDAGVPMKKHVAGIAMGLIKAEDKFVILSDILGDEDHLGDMDFKVAGTRDGVTSIQMDIKVKGLTKEILEKALQQARDGRNYILDLMYQAIPEPRKEVSPYAPTVTTLRVLPDKIPIIIGPAGKNIKKIIEETKVKIDLDPEGLVKIYATSKEAAEKAVSMINELILDVEVGEVYMGKVTRVEDYGAFVELLPGRLSLLHVSQITGERLKSAKEKIKVGDVLKVKVSEIDDQGRIKVSLKDVPENVEPKNKFLFKEE</sequence>
<evidence type="ECO:0000255" key="1">
    <source>
        <dbReference type="HAMAP-Rule" id="MF_01595"/>
    </source>
</evidence>
<proteinExistence type="inferred from homology"/>
<protein>
    <recommendedName>
        <fullName evidence="1">Polyribonucleotide nucleotidyltransferase</fullName>
        <ecNumber evidence="1">2.7.7.8</ecNumber>
    </recommendedName>
    <alternativeName>
        <fullName evidence="1">Polynucleotide phosphorylase</fullName>
        <shortName evidence="1">PNPase</shortName>
    </alternativeName>
</protein>
<keyword id="KW-0963">Cytoplasm</keyword>
<keyword id="KW-0460">Magnesium</keyword>
<keyword id="KW-0479">Metal-binding</keyword>
<keyword id="KW-0548">Nucleotidyltransferase</keyword>
<keyword id="KW-1185">Reference proteome</keyword>
<keyword id="KW-0694">RNA-binding</keyword>
<keyword id="KW-0808">Transferase</keyword>
<dbReference type="EC" id="2.7.7.8" evidence="1"/>
<dbReference type="EMBL" id="CP001229">
    <property type="protein sequence ID" value="ACN99597.1"/>
    <property type="molecule type" value="Genomic_DNA"/>
</dbReference>
<dbReference type="RefSeq" id="WP_012674909.1">
    <property type="nucleotide sequence ID" value="NC_012438.1"/>
</dbReference>
<dbReference type="SMR" id="C1DTW6"/>
<dbReference type="STRING" id="204536.SULAZ_0563"/>
<dbReference type="KEGG" id="saf:SULAZ_0563"/>
<dbReference type="eggNOG" id="COG1185">
    <property type="taxonomic scope" value="Bacteria"/>
</dbReference>
<dbReference type="HOGENOM" id="CLU_004217_2_2_0"/>
<dbReference type="OrthoDB" id="9804305at2"/>
<dbReference type="Proteomes" id="UP000001369">
    <property type="component" value="Chromosome"/>
</dbReference>
<dbReference type="GO" id="GO:0005829">
    <property type="term" value="C:cytosol"/>
    <property type="evidence" value="ECO:0007669"/>
    <property type="project" value="TreeGrafter"/>
</dbReference>
<dbReference type="GO" id="GO:0000175">
    <property type="term" value="F:3'-5'-RNA exonuclease activity"/>
    <property type="evidence" value="ECO:0007669"/>
    <property type="project" value="TreeGrafter"/>
</dbReference>
<dbReference type="GO" id="GO:0000287">
    <property type="term" value="F:magnesium ion binding"/>
    <property type="evidence" value="ECO:0007669"/>
    <property type="project" value="UniProtKB-UniRule"/>
</dbReference>
<dbReference type="GO" id="GO:0004654">
    <property type="term" value="F:polyribonucleotide nucleotidyltransferase activity"/>
    <property type="evidence" value="ECO:0007669"/>
    <property type="project" value="UniProtKB-UniRule"/>
</dbReference>
<dbReference type="GO" id="GO:0003723">
    <property type="term" value="F:RNA binding"/>
    <property type="evidence" value="ECO:0007669"/>
    <property type="project" value="UniProtKB-UniRule"/>
</dbReference>
<dbReference type="GO" id="GO:0006402">
    <property type="term" value="P:mRNA catabolic process"/>
    <property type="evidence" value="ECO:0007669"/>
    <property type="project" value="UniProtKB-UniRule"/>
</dbReference>
<dbReference type="GO" id="GO:0006396">
    <property type="term" value="P:RNA processing"/>
    <property type="evidence" value="ECO:0007669"/>
    <property type="project" value="InterPro"/>
</dbReference>
<dbReference type="CDD" id="cd02393">
    <property type="entry name" value="KH-I_PNPase"/>
    <property type="match status" value="1"/>
</dbReference>
<dbReference type="CDD" id="cd11363">
    <property type="entry name" value="RNase_PH_PNPase_1"/>
    <property type="match status" value="1"/>
</dbReference>
<dbReference type="CDD" id="cd11364">
    <property type="entry name" value="RNase_PH_PNPase_2"/>
    <property type="match status" value="1"/>
</dbReference>
<dbReference type="FunFam" id="3.30.1370.10:FF:000001">
    <property type="entry name" value="Polyribonucleotide nucleotidyltransferase"/>
    <property type="match status" value="1"/>
</dbReference>
<dbReference type="FunFam" id="3.30.230.70:FF:000001">
    <property type="entry name" value="Polyribonucleotide nucleotidyltransferase"/>
    <property type="match status" value="1"/>
</dbReference>
<dbReference type="FunFam" id="3.30.230.70:FF:000002">
    <property type="entry name" value="Polyribonucleotide nucleotidyltransferase"/>
    <property type="match status" value="1"/>
</dbReference>
<dbReference type="FunFam" id="2.40.50.140:FF:000189">
    <property type="entry name" value="Polyribonucleotide nucleotidyltransferase, putative"/>
    <property type="match status" value="1"/>
</dbReference>
<dbReference type="Gene3D" id="3.30.230.70">
    <property type="entry name" value="GHMP Kinase, N-terminal domain"/>
    <property type="match status" value="2"/>
</dbReference>
<dbReference type="Gene3D" id="3.30.1370.10">
    <property type="entry name" value="K Homology domain, type 1"/>
    <property type="match status" value="1"/>
</dbReference>
<dbReference type="Gene3D" id="2.40.50.140">
    <property type="entry name" value="Nucleic acid-binding proteins"/>
    <property type="match status" value="1"/>
</dbReference>
<dbReference type="HAMAP" id="MF_01595">
    <property type="entry name" value="PNPase"/>
    <property type="match status" value="1"/>
</dbReference>
<dbReference type="InterPro" id="IPR001247">
    <property type="entry name" value="ExoRNase_PH_dom1"/>
</dbReference>
<dbReference type="InterPro" id="IPR015847">
    <property type="entry name" value="ExoRNase_PH_dom2"/>
</dbReference>
<dbReference type="InterPro" id="IPR036345">
    <property type="entry name" value="ExoRNase_PH_dom2_sf"/>
</dbReference>
<dbReference type="InterPro" id="IPR004087">
    <property type="entry name" value="KH_dom"/>
</dbReference>
<dbReference type="InterPro" id="IPR004088">
    <property type="entry name" value="KH_dom_type_1"/>
</dbReference>
<dbReference type="InterPro" id="IPR036612">
    <property type="entry name" value="KH_dom_type_1_sf"/>
</dbReference>
<dbReference type="InterPro" id="IPR012340">
    <property type="entry name" value="NA-bd_OB-fold"/>
</dbReference>
<dbReference type="InterPro" id="IPR012162">
    <property type="entry name" value="PNPase"/>
</dbReference>
<dbReference type="InterPro" id="IPR027408">
    <property type="entry name" value="PNPase/RNase_PH_dom_sf"/>
</dbReference>
<dbReference type="InterPro" id="IPR015848">
    <property type="entry name" value="PNPase_PH_RNA-bd_bac/org-type"/>
</dbReference>
<dbReference type="InterPro" id="IPR036456">
    <property type="entry name" value="PNPase_PH_RNA-bd_sf"/>
</dbReference>
<dbReference type="InterPro" id="IPR020568">
    <property type="entry name" value="Ribosomal_Su5_D2-typ_SF"/>
</dbReference>
<dbReference type="InterPro" id="IPR003029">
    <property type="entry name" value="S1_domain"/>
</dbReference>
<dbReference type="NCBIfam" id="TIGR03591">
    <property type="entry name" value="polynuc_phos"/>
    <property type="match status" value="1"/>
</dbReference>
<dbReference type="NCBIfam" id="NF008805">
    <property type="entry name" value="PRK11824.1"/>
    <property type="match status" value="1"/>
</dbReference>
<dbReference type="PANTHER" id="PTHR11252">
    <property type="entry name" value="POLYRIBONUCLEOTIDE NUCLEOTIDYLTRANSFERASE"/>
    <property type="match status" value="1"/>
</dbReference>
<dbReference type="PANTHER" id="PTHR11252:SF0">
    <property type="entry name" value="POLYRIBONUCLEOTIDE NUCLEOTIDYLTRANSFERASE 1, MITOCHONDRIAL"/>
    <property type="match status" value="1"/>
</dbReference>
<dbReference type="Pfam" id="PF00013">
    <property type="entry name" value="KH_1"/>
    <property type="match status" value="1"/>
</dbReference>
<dbReference type="Pfam" id="PF03726">
    <property type="entry name" value="PNPase"/>
    <property type="match status" value="1"/>
</dbReference>
<dbReference type="Pfam" id="PF01138">
    <property type="entry name" value="RNase_PH"/>
    <property type="match status" value="2"/>
</dbReference>
<dbReference type="Pfam" id="PF03725">
    <property type="entry name" value="RNase_PH_C"/>
    <property type="match status" value="2"/>
</dbReference>
<dbReference type="Pfam" id="PF00575">
    <property type="entry name" value="S1"/>
    <property type="match status" value="1"/>
</dbReference>
<dbReference type="PIRSF" id="PIRSF005499">
    <property type="entry name" value="PNPase"/>
    <property type="match status" value="1"/>
</dbReference>
<dbReference type="SMART" id="SM00322">
    <property type="entry name" value="KH"/>
    <property type="match status" value="1"/>
</dbReference>
<dbReference type="SMART" id="SM00316">
    <property type="entry name" value="S1"/>
    <property type="match status" value="1"/>
</dbReference>
<dbReference type="SUPFAM" id="SSF54791">
    <property type="entry name" value="Eukaryotic type KH-domain (KH-domain type I)"/>
    <property type="match status" value="1"/>
</dbReference>
<dbReference type="SUPFAM" id="SSF50249">
    <property type="entry name" value="Nucleic acid-binding proteins"/>
    <property type="match status" value="1"/>
</dbReference>
<dbReference type="SUPFAM" id="SSF46915">
    <property type="entry name" value="Polynucleotide phosphorylase/guanosine pentaphosphate synthase (PNPase/GPSI), domain 3"/>
    <property type="match status" value="1"/>
</dbReference>
<dbReference type="SUPFAM" id="SSF55666">
    <property type="entry name" value="Ribonuclease PH domain 2-like"/>
    <property type="match status" value="2"/>
</dbReference>
<dbReference type="SUPFAM" id="SSF54211">
    <property type="entry name" value="Ribosomal protein S5 domain 2-like"/>
    <property type="match status" value="2"/>
</dbReference>
<dbReference type="PROSITE" id="PS50084">
    <property type="entry name" value="KH_TYPE_1"/>
    <property type="match status" value="1"/>
</dbReference>
<dbReference type="PROSITE" id="PS50126">
    <property type="entry name" value="S1"/>
    <property type="match status" value="1"/>
</dbReference>
<accession>C1DTW6</accession>
<gene>
    <name evidence="1" type="primary">pnp</name>
    <name type="ordered locus">SULAZ_0563</name>
</gene>
<comment type="function">
    <text evidence="1">Involved in mRNA degradation. Catalyzes the phosphorolysis of single-stranded polyribonucleotides processively in the 3'- to 5'-direction.</text>
</comment>
<comment type="catalytic activity">
    <reaction evidence="1">
        <text>RNA(n+1) + phosphate = RNA(n) + a ribonucleoside 5'-diphosphate</text>
        <dbReference type="Rhea" id="RHEA:22096"/>
        <dbReference type="Rhea" id="RHEA-COMP:14527"/>
        <dbReference type="Rhea" id="RHEA-COMP:17342"/>
        <dbReference type="ChEBI" id="CHEBI:43474"/>
        <dbReference type="ChEBI" id="CHEBI:57930"/>
        <dbReference type="ChEBI" id="CHEBI:140395"/>
        <dbReference type="EC" id="2.7.7.8"/>
    </reaction>
</comment>
<comment type="cofactor">
    <cofactor evidence="1">
        <name>Mg(2+)</name>
        <dbReference type="ChEBI" id="CHEBI:18420"/>
    </cofactor>
</comment>
<comment type="subcellular location">
    <subcellularLocation>
        <location evidence="1">Cytoplasm</location>
    </subcellularLocation>
</comment>
<comment type="similarity">
    <text evidence="1">Belongs to the polyribonucleotide nucleotidyltransferase family.</text>
</comment>
<reference key="1">
    <citation type="journal article" date="2009" name="J. Bacteriol.">
        <title>Complete and draft genome sequences of six members of the Aquificales.</title>
        <authorList>
            <person name="Reysenbach A.-L."/>
            <person name="Hamamura N."/>
            <person name="Podar M."/>
            <person name="Griffiths E."/>
            <person name="Ferreira S."/>
            <person name="Hochstein R."/>
            <person name="Heidelberg J."/>
            <person name="Johnson J."/>
            <person name="Mead D."/>
            <person name="Pohorille A."/>
            <person name="Sarmiento M."/>
            <person name="Schweighofer K."/>
            <person name="Seshadri R."/>
            <person name="Voytek M.A."/>
        </authorList>
    </citation>
    <scope>NUCLEOTIDE SEQUENCE [LARGE SCALE GENOMIC DNA]</scope>
    <source>
        <strain>DSM 15241 / OCM 825 / Az-Fu1</strain>
    </source>
</reference>
<feature type="chain" id="PRO_0000381922" description="Polyribonucleotide nucleotidyltransferase">
    <location>
        <begin position="1"/>
        <end position="707"/>
    </location>
</feature>
<feature type="domain" description="KH" evidence="1">
    <location>
        <begin position="553"/>
        <end position="612"/>
    </location>
</feature>
<feature type="domain" description="S1 motif" evidence="1">
    <location>
        <begin position="622"/>
        <end position="690"/>
    </location>
</feature>
<feature type="binding site" evidence="1">
    <location>
        <position position="486"/>
    </location>
    <ligand>
        <name>Mg(2+)</name>
        <dbReference type="ChEBI" id="CHEBI:18420"/>
    </ligand>
</feature>
<feature type="binding site" evidence="1">
    <location>
        <position position="492"/>
    </location>
    <ligand>
        <name>Mg(2+)</name>
        <dbReference type="ChEBI" id="CHEBI:18420"/>
    </ligand>
</feature>
<name>PNP_SULAA</name>